<dbReference type="EMBL" id="U08843">
    <property type="protein sequence ID" value="AAA61792.1"/>
    <property type="molecule type" value="mRNA"/>
</dbReference>
<dbReference type="SMR" id="P50272"/>
<dbReference type="CAZy" id="CBM1">
    <property type="family name" value="Carbohydrate-Binding Module Family 1"/>
</dbReference>
<dbReference type="GO" id="GO:0005576">
    <property type="term" value="C:extracellular region"/>
    <property type="evidence" value="ECO:0007669"/>
    <property type="project" value="InterPro"/>
</dbReference>
<dbReference type="GO" id="GO:0030248">
    <property type="term" value="F:cellulose binding"/>
    <property type="evidence" value="ECO:0007669"/>
    <property type="project" value="InterPro"/>
</dbReference>
<dbReference type="GO" id="GO:0005975">
    <property type="term" value="P:carbohydrate metabolic process"/>
    <property type="evidence" value="ECO:0007669"/>
    <property type="project" value="InterPro"/>
</dbReference>
<dbReference type="InterPro" id="IPR035971">
    <property type="entry name" value="CBD_sf"/>
</dbReference>
<dbReference type="InterPro" id="IPR000254">
    <property type="entry name" value="Cellulose-bd_dom_fun"/>
</dbReference>
<dbReference type="Pfam" id="PF00734">
    <property type="entry name" value="CBM_1"/>
    <property type="match status" value="3"/>
</dbReference>
<dbReference type="SMART" id="SM00236">
    <property type="entry name" value="fCBD"/>
    <property type="match status" value="4"/>
</dbReference>
<dbReference type="SUPFAM" id="SSF57180">
    <property type="entry name" value="Cellulose-binding domain"/>
    <property type="match status" value="3"/>
</dbReference>
<dbReference type="PROSITE" id="PS00562">
    <property type="entry name" value="CBM1_1"/>
    <property type="match status" value="4"/>
</dbReference>
<dbReference type="PROSITE" id="PS51164">
    <property type="entry name" value="CBM1_2"/>
    <property type="match status" value="4"/>
</dbReference>
<accession>P50272</accession>
<organism>
    <name type="scientific">Porphyra purpurea</name>
    <name type="common">Red seaweed</name>
    <name type="synonym">Ulva purpurea</name>
    <dbReference type="NCBI Taxonomy" id="2787"/>
    <lineage>
        <taxon>Eukaryota</taxon>
        <taxon>Rhodophyta</taxon>
        <taxon>Bangiophyceae</taxon>
        <taxon>Bangiales</taxon>
        <taxon>Bangiaceae</taxon>
        <taxon>Porphyra</taxon>
    </lineage>
</organism>
<sequence>MGFLKGTAAALTLLSAAAAASACGVLYEQCGGIGFDGVTCCSEGLMCMKMGPYYSQCRAMPGMMGQVKPYGQCGGMNYSGKTMCSPGFKCVELNEFFSQCDLANKSPVATPKVSPTSPPGPAQVCGKEYAACGGEMFMGAKCCKFGLVCYETSGKWQSQCRAPPPKMGEVGRYAQCGGMGYMGSTMCVGGYKCMAISEGSMYKQCLPMHP</sequence>
<name>PSBP_PORPU</name>
<evidence type="ECO:0000255" key="1">
    <source>
        <dbReference type="PROSITE-ProRule" id="PRU00597"/>
    </source>
</evidence>
<feature type="signal peptide">
    <location>
        <begin position="1"/>
        <end position="22"/>
    </location>
</feature>
<feature type="chain" id="PRO_0000022166" description="Putative polysaccharide-binding protein">
    <location>
        <begin position="23"/>
        <end position="210"/>
    </location>
</feature>
<feature type="domain" description="CBM1 1" evidence="1">
    <location>
        <begin position="23"/>
        <end position="62"/>
    </location>
</feature>
<feature type="domain" description="CBM1 2" evidence="1">
    <location>
        <begin position="63"/>
        <end position="105"/>
    </location>
</feature>
<feature type="domain" description="CBM1 3" evidence="1">
    <location>
        <begin position="125"/>
        <end position="165"/>
    </location>
</feature>
<feature type="domain" description="CBM1 4" evidence="1">
    <location>
        <begin position="166"/>
        <end position="210"/>
    </location>
</feature>
<protein>
    <recommendedName>
        <fullName>Putative polysaccharide-binding protein</fullName>
    </recommendedName>
</protein>
<keyword id="KW-0677">Repeat</keyword>
<keyword id="KW-0732">Signal</keyword>
<proteinExistence type="evidence at transcript level"/>
<reference key="1">
    <citation type="submission" date="1994-05" db="EMBL/GenBank/DDBJ databases">
        <authorList>
            <person name="Liu Q."/>
            <person name="der Meer J.P."/>
            <person name="Reith M.E."/>
        </authorList>
    </citation>
    <scope>NUCLEOTIDE SEQUENCE [MRNA]</scope>
    <source>
        <strain>Avonport</strain>
    </source>
</reference>